<sequence length="396" mass="44481">MTVRLILAKGREKSLLRRHPWIFSGAVQRLEGDALSGETIDILDSQGKWLARAAYSPESQILARVWTFQQDEVIDCAFFIRRLQQAQNWRDWLAQRDGLNGYRLIAGESDGLPGITIDRFQNFLVLQLLSAGAEYQRETLVSALQHCYPECSIYDRSDVSVRKKEGLPLTQGLICGEMPPALLPISENGMQLFVDIQQGHKTGFYLDQRDSRLAARNYANGRRVLNCFSYTGAFAVAALMGNCQQVISVDTSQSVLDIAKQNIELNQLDLSKTEFVRDDVFQLLRSYRAQGEKFDLIIMDPPKFVENKSQLASACRGYKDINMLAIQLLRPGGILLSFSCSGLMPVDLFQKILADAALDAGHDIQFIEQFRQAADHPVIAAYPEGLYLKGFACRVM</sequence>
<protein>
    <recommendedName>
        <fullName evidence="1">Ribosomal RNA large subunit methyltransferase I</fullName>
        <ecNumber evidence="1">2.1.1.191</ecNumber>
    </recommendedName>
    <alternativeName>
        <fullName evidence="1">23S rRNA m5C1962 methyltransferase</fullName>
    </alternativeName>
    <alternativeName>
        <fullName evidence="1">rRNA (cytosine-C(5)-)-methyltransferase RlmI</fullName>
    </alternativeName>
</protein>
<organism>
    <name type="scientific">Yersinia pestis bv. Antiqua (strain Nepal516)</name>
    <dbReference type="NCBI Taxonomy" id="377628"/>
    <lineage>
        <taxon>Bacteria</taxon>
        <taxon>Pseudomonadati</taxon>
        <taxon>Pseudomonadota</taxon>
        <taxon>Gammaproteobacteria</taxon>
        <taxon>Enterobacterales</taxon>
        <taxon>Yersiniaceae</taxon>
        <taxon>Yersinia</taxon>
    </lineage>
</organism>
<evidence type="ECO:0000255" key="1">
    <source>
        <dbReference type="HAMAP-Rule" id="MF_01857"/>
    </source>
</evidence>
<gene>
    <name evidence="1" type="primary">rlmI</name>
    <name type="ordered locus">YPN_2534</name>
    <name type="ORF">YP516_2847</name>
</gene>
<name>RLMI_YERPN</name>
<accession>Q1CGL8</accession>
<accession>C4GVL5</accession>
<keyword id="KW-0963">Cytoplasm</keyword>
<keyword id="KW-0489">Methyltransferase</keyword>
<keyword id="KW-0694">RNA-binding</keyword>
<keyword id="KW-0698">rRNA processing</keyword>
<keyword id="KW-0949">S-adenosyl-L-methionine</keyword>
<keyword id="KW-0808">Transferase</keyword>
<reference key="1">
    <citation type="journal article" date="2006" name="J. Bacteriol.">
        <title>Complete genome sequence of Yersinia pestis strains Antiqua and Nepal516: evidence of gene reduction in an emerging pathogen.</title>
        <authorList>
            <person name="Chain P.S.G."/>
            <person name="Hu P."/>
            <person name="Malfatti S.A."/>
            <person name="Radnedge L."/>
            <person name="Larimer F."/>
            <person name="Vergez L.M."/>
            <person name="Worsham P."/>
            <person name="Chu M.C."/>
            <person name="Andersen G.L."/>
        </authorList>
    </citation>
    <scope>NUCLEOTIDE SEQUENCE [LARGE SCALE GENOMIC DNA]</scope>
    <source>
        <strain>Nepal516</strain>
    </source>
</reference>
<reference key="2">
    <citation type="submission" date="2009-04" db="EMBL/GenBank/DDBJ databases">
        <title>Yersinia pestis Nepal516A whole genome shotgun sequencing project.</title>
        <authorList>
            <person name="Plunkett G. III"/>
            <person name="Anderson B.D."/>
            <person name="Baumler D.J."/>
            <person name="Burland V."/>
            <person name="Cabot E.L."/>
            <person name="Glasner J.D."/>
            <person name="Mau B."/>
            <person name="Neeno-Eckwall E."/>
            <person name="Perna N.T."/>
            <person name="Munk A.C."/>
            <person name="Tapia R."/>
            <person name="Green L.D."/>
            <person name="Rogers Y.C."/>
            <person name="Detter J.C."/>
            <person name="Bruce D.C."/>
            <person name="Brettin T.S."/>
        </authorList>
    </citation>
    <scope>NUCLEOTIDE SEQUENCE [LARGE SCALE GENOMIC DNA]</scope>
    <source>
        <strain>Nepal516</strain>
    </source>
</reference>
<dbReference type="EC" id="2.1.1.191" evidence="1"/>
<dbReference type="EMBL" id="CP000305">
    <property type="protein sequence ID" value="ABG18862.1"/>
    <property type="molecule type" value="Genomic_DNA"/>
</dbReference>
<dbReference type="EMBL" id="ACNQ01000015">
    <property type="protein sequence ID" value="EEO75971.1"/>
    <property type="molecule type" value="Genomic_DNA"/>
</dbReference>
<dbReference type="RefSeq" id="WP_002213052.1">
    <property type="nucleotide sequence ID" value="NZ_ACNQ01000015.1"/>
</dbReference>
<dbReference type="SMR" id="Q1CGL8"/>
<dbReference type="GeneID" id="57977118"/>
<dbReference type="KEGG" id="ypn:YPN_2534"/>
<dbReference type="HOGENOM" id="CLU_014042_0_0_6"/>
<dbReference type="Proteomes" id="UP000008936">
    <property type="component" value="Chromosome"/>
</dbReference>
<dbReference type="GO" id="GO:0005737">
    <property type="term" value="C:cytoplasm"/>
    <property type="evidence" value="ECO:0007669"/>
    <property type="project" value="UniProtKB-SubCell"/>
</dbReference>
<dbReference type="GO" id="GO:0003723">
    <property type="term" value="F:RNA binding"/>
    <property type="evidence" value="ECO:0007669"/>
    <property type="project" value="UniProtKB-KW"/>
</dbReference>
<dbReference type="GO" id="GO:0016434">
    <property type="term" value="F:rRNA (cytosine) methyltransferase activity"/>
    <property type="evidence" value="ECO:0007669"/>
    <property type="project" value="UniProtKB-UniRule"/>
</dbReference>
<dbReference type="CDD" id="cd02440">
    <property type="entry name" value="AdoMet_MTases"/>
    <property type="match status" value="1"/>
</dbReference>
<dbReference type="CDD" id="cd21153">
    <property type="entry name" value="PUA_RlmI"/>
    <property type="match status" value="1"/>
</dbReference>
<dbReference type="CDD" id="cd11572">
    <property type="entry name" value="RlmI_M_like"/>
    <property type="match status" value="1"/>
</dbReference>
<dbReference type="Gene3D" id="2.30.130.10">
    <property type="entry name" value="PUA domain"/>
    <property type="match status" value="1"/>
</dbReference>
<dbReference type="Gene3D" id="3.30.750.80">
    <property type="entry name" value="RNA methyltransferase domain (HRMD) like"/>
    <property type="match status" value="1"/>
</dbReference>
<dbReference type="Gene3D" id="3.40.50.150">
    <property type="entry name" value="Vaccinia Virus protein VP39"/>
    <property type="match status" value="1"/>
</dbReference>
<dbReference type="HAMAP" id="MF_01857">
    <property type="entry name" value="23SrRNA_methyltr_I"/>
    <property type="match status" value="1"/>
</dbReference>
<dbReference type="InterPro" id="IPR002478">
    <property type="entry name" value="PUA"/>
</dbReference>
<dbReference type="InterPro" id="IPR015947">
    <property type="entry name" value="PUA-like_sf"/>
</dbReference>
<dbReference type="InterPro" id="IPR036974">
    <property type="entry name" value="PUA_sf"/>
</dbReference>
<dbReference type="InterPro" id="IPR023542">
    <property type="entry name" value="RLMI"/>
</dbReference>
<dbReference type="InterPro" id="IPR041532">
    <property type="entry name" value="RlmI-like_PUA"/>
</dbReference>
<dbReference type="InterPro" id="IPR019614">
    <property type="entry name" value="SAM-dep_methyl-trfase"/>
</dbReference>
<dbReference type="InterPro" id="IPR029063">
    <property type="entry name" value="SAM-dependent_MTases_sf"/>
</dbReference>
<dbReference type="NCBIfam" id="NF011707">
    <property type="entry name" value="PRK15128.1"/>
    <property type="match status" value="1"/>
</dbReference>
<dbReference type="PANTHER" id="PTHR42873">
    <property type="entry name" value="RIBOSOMAL RNA LARGE SUBUNIT METHYLTRANSFERASE"/>
    <property type="match status" value="1"/>
</dbReference>
<dbReference type="PANTHER" id="PTHR42873:SF1">
    <property type="entry name" value="S-ADENOSYLMETHIONINE-DEPENDENT METHYLTRANSFERASE DOMAIN-CONTAINING PROTEIN"/>
    <property type="match status" value="1"/>
</dbReference>
<dbReference type="Pfam" id="PF10672">
    <property type="entry name" value="Methyltrans_SAM"/>
    <property type="match status" value="1"/>
</dbReference>
<dbReference type="Pfam" id="PF17785">
    <property type="entry name" value="PUA_3"/>
    <property type="match status" value="1"/>
</dbReference>
<dbReference type="SMART" id="SM00359">
    <property type="entry name" value="PUA"/>
    <property type="match status" value="1"/>
</dbReference>
<dbReference type="SUPFAM" id="SSF88697">
    <property type="entry name" value="PUA domain-like"/>
    <property type="match status" value="1"/>
</dbReference>
<dbReference type="SUPFAM" id="SSF53335">
    <property type="entry name" value="S-adenosyl-L-methionine-dependent methyltransferases"/>
    <property type="match status" value="1"/>
</dbReference>
<dbReference type="PROSITE" id="PS50890">
    <property type="entry name" value="PUA"/>
    <property type="match status" value="1"/>
</dbReference>
<proteinExistence type="inferred from homology"/>
<comment type="function">
    <text evidence="1">Specifically methylates the cytosine at position 1962 (m5C1962) of 23S rRNA.</text>
</comment>
<comment type="catalytic activity">
    <reaction evidence="1">
        <text>cytidine(1962) in 23S rRNA + S-adenosyl-L-methionine = 5-methylcytidine(1962) in 23S rRNA + S-adenosyl-L-homocysteine + H(+)</text>
        <dbReference type="Rhea" id="RHEA:42912"/>
        <dbReference type="Rhea" id="RHEA-COMP:10382"/>
        <dbReference type="Rhea" id="RHEA-COMP:10386"/>
        <dbReference type="ChEBI" id="CHEBI:15378"/>
        <dbReference type="ChEBI" id="CHEBI:57856"/>
        <dbReference type="ChEBI" id="CHEBI:59789"/>
        <dbReference type="ChEBI" id="CHEBI:74483"/>
        <dbReference type="ChEBI" id="CHEBI:82748"/>
        <dbReference type="EC" id="2.1.1.191"/>
    </reaction>
</comment>
<comment type="subcellular location">
    <subcellularLocation>
        <location evidence="1">Cytoplasm</location>
    </subcellularLocation>
</comment>
<comment type="similarity">
    <text evidence="1">Belongs to the methyltransferase superfamily. RlmI family.</text>
</comment>
<feature type="chain" id="PRO_0000366284" description="Ribosomal RNA large subunit methyltransferase I">
    <location>
        <begin position="1"/>
        <end position="396"/>
    </location>
</feature>
<feature type="domain" description="PUA" evidence="1">
    <location>
        <begin position="2"/>
        <end position="81"/>
    </location>
</feature>